<evidence type="ECO:0000250" key="1">
    <source>
        <dbReference type="UniProtKB" id="P0AAP3"/>
    </source>
</evidence>
<evidence type="ECO:0000305" key="2"/>
<organism>
    <name type="scientific">Escherichia coli (strain SMS-3-5 / SECEC)</name>
    <dbReference type="NCBI Taxonomy" id="439855"/>
    <lineage>
        <taxon>Bacteria</taxon>
        <taxon>Pseudomonadati</taxon>
        <taxon>Pseudomonadota</taxon>
        <taxon>Gammaproteobacteria</taxon>
        <taxon>Enterobacterales</taxon>
        <taxon>Enterobacteriaceae</taxon>
        <taxon>Escherichia</taxon>
    </lineage>
</organism>
<dbReference type="EMBL" id="CP000970">
    <property type="protein sequence ID" value="ACB16680.1"/>
    <property type="molecule type" value="Genomic_DNA"/>
</dbReference>
<dbReference type="RefSeq" id="WP_001141271.1">
    <property type="nucleotide sequence ID" value="NC_010498.1"/>
</dbReference>
<dbReference type="SMR" id="B1LIP2"/>
<dbReference type="GeneID" id="93777098"/>
<dbReference type="KEGG" id="ecm:EcSMS35_0388"/>
<dbReference type="HOGENOM" id="CLU_130332_3_0_6"/>
<dbReference type="Proteomes" id="UP000007011">
    <property type="component" value="Chromosome"/>
</dbReference>
<dbReference type="GO" id="GO:0005737">
    <property type="term" value="C:cytoplasm"/>
    <property type="evidence" value="ECO:0007669"/>
    <property type="project" value="UniProtKB-SubCell"/>
</dbReference>
<dbReference type="GO" id="GO:0003677">
    <property type="term" value="F:DNA binding"/>
    <property type="evidence" value="ECO:0007669"/>
    <property type="project" value="UniProtKB-KW"/>
</dbReference>
<dbReference type="GO" id="GO:0046872">
    <property type="term" value="F:metal ion binding"/>
    <property type="evidence" value="ECO:0007669"/>
    <property type="project" value="InterPro"/>
</dbReference>
<dbReference type="GO" id="GO:0045892">
    <property type="term" value="P:negative regulation of DNA-templated transcription"/>
    <property type="evidence" value="ECO:0007669"/>
    <property type="project" value="UniProtKB-ARBA"/>
</dbReference>
<dbReference type="CDD" id="cd10153">
    <property type="entry name" value="RcnR-FrmR-like_DUF156"/>
    <property type="match status" value="1"/>
</dbReference>
<dbReference type="FunFam" id="1.20.58.1000:FF:000002">
    <property type="entry name" value="Transcriptional repressor FrmR"/>
    <property type="match status" value="1"/>
</dbReference>
<dbReference type="Gene3D" id="1.20.58.1000">
    <property type="entry name" value="Metal-sensitive repressor, helix protomer"/>
    <property type="match status" value="1"/>
</dbReference>
<dbReference type="InterPro" id="IPR003735">
    <property type="entry name" value="Metal_Tscrpt_repr"/>
</dbReference>
<dbReference type="InterPro" id="IPR038390">
    <property type="entry name" value="Metal_Tscrpt_repr_sf"/>
</dbReference>
<dbReference type="NCBIfam" id="NF008464">
    <property type="entry name" value="PRK11352.1"/>
    <property type="match status" value="1"/>
</dbReference>
<dbReference type="PANTHER" id="PTHR33677:SF5">
    <property type="entry name" value="TRANSCRIPTIONAL REPRESSOR FRMR"/>
    <property type="match status" value="1"/>
</dbReference>
<dbReference type="PANTHER" id="PTHR33677">
    <property type="entry name" value="TRANSCRIPTIONAL REPRESSOR FRMR-RELATED"/>
    <property type="match status" value="1"/>
</dbReference>
<dbReference type="Pfam" id="PF02583">
    <property type="entry name" value="Trns_repr_metal"/>
    <property type="match status" value="1"/>
</dbReference>
<comment type="function">
    <text evidence="1">Formaldehyde sensor. In the absence of formaldehyde, mediates repression of the frmRAB operon. Acts by binding directly to the frmRAB promoter region. In the presence of formaldehyde, it dissociates from the frmRAB promoter region and allows expression of the formaldehyde detoxification system encoded by frmA and frmB.</text>
</comment>
<comment type="subunit">
    <text evidence="1">Homotetramer.</text>
</comment>
<comment type="subcellular location">
    <subcellularLocation>
        <location evidence="1">Cytoplasm</location>
    </subcellularLocation>
</comment>
<comment type="similarity">
    <text evidence="2">Belongs to the FrmR/RcnR family.</text>
</comment>
<sequence>MPSTPEEKKKVLTRVRRIRGQIDALERSLEGDAECRAILQQIAAVRGAANGLMAEVLESHIRETFDRNDCYSREVSQSVDDTIELVRAYLK</sequence>
<feature type="chain" id="PRO_0000340121" description="Transcriptional repressor FrmR">
    <location>
        <begin position="1"/>
        <end position="91"/>
    </location>
</feature>
<feature type="site" description="Important for response to formaldehyde" evidence="1">
    <location>
        <position position="2"/>
    </location>
</feature>
<feature type="site" description="Important for response to formaldehyde" evidence="1">
    <location>
        <position position="35"/>
    </location>
</feature>
<reference key="1">
    <citation type="journal article" date="2008" name="J. Bacteriol.">
        <title>Insights into the environmental resistance gene pool from the genome sequence of the multidrug-resistant environmental isolate Escherichia coli SMS-3-5.</title>
        <authorList>
            <person name="Fricke W.F."/>
            <person name="Wright M.S."/>
            <person name="Lindell A.H."/>
            <person name="Harkins D.M."/>
            <person name="Baker-Austin C."/>
            <person name="Ravel J."/>
            <person name="Stepanauskas R."/>
        </authorList>
    </citation>
    <scope>NUCLEOTIDE SEQUENCE [LARGE SCALE GENOMIC DNA]</scope>
    <source>
        <strain>SMS-3-5 / SECEC</strain>
    </source>
</reference>
<keyword id="KW-0963">Cytoplasm</keyword>
<keyword id="KW-0238">DNA-binding</keyword>
<keyword id="KW-0678">Repressor</keyword>
<keyword id="KW-0804">Transcription</keyword>
<keyword id="KW-0805">Transcription regulation</keyword>
<name>FRMR_ECOSM</name>
<accession>B1LIP2</accession>
<gene>
    <name evidence="1" type="primary">frmR</name>
    <name type="ordered locus">EcSMS35_0388</name>
</gene>
<protein>
    <recommendedName>
        <fullName evidence="1">Transcriptional repressor FrmR</fullName>
    </recommendedName>
</protein>
<proteinExistence type="inferred from homology"/>